<proteinExistence type="inferred from homology"/>
<evidence type="ECO:0000250" key="1"/>
<evidence type="ECO:0000255" key="2"/>
<evidence type="ECO:0000255" key="3">
    <source>
        <dbReference type="PROSITE-ProRule" id="PRU00280"/>
    </source>
</evidence>
<evidence type="ECO:0000305" key="4"/>
<protein>
    <recommendedName>
        <fullName>Probable copper-transporting ATPase SynA</fullName>
        <ecNumber>7.2.2.9</ecNumber>
    </recommendedName>
</protein>
<comment type="function">
    <text>Involved in copper transport.</text>
</comment>
<comment type="catalytic activity">
    <reaction>
        <text>Cu(2+)(in) + ATP + H2O = Cu(2+)(out) + ADP + phosphate + H(+)</text>
        <dbReference type="Rhea" id="RHEA:10376"/>
        <dbReference type="ChEBI" id="CHEBI:15377"/>
        <dbReference type="ChEBI" id="CHEBI:15378"/>
        <dbReference type="ChEBI" id="CHEBI:29036"/>
        <dbReference type="ChEBI" id="CHEBI:30616"/>
        <dbReference type="ChEBI" id="CHEBI:43474"/>
        <dbReference type="ChEBI" id="CHEBI:456216"/>
        <dbReference type="EC" id="7.2.2.9"/>
    </reaction>
</comment>
<comment type="subcellular location">
    <subcellularLocation>
        <location>Cell membrane</location>
        <topology>Multi-pass membrane protein</topology>
    </subcellularLocation>
</comment>
<comment type="similarity">
    <text evidence="4">Belongs to the cation transport ATPase (P-type) (TC 3.A.3) family. Type IB subfamily.</text>
</comment>
<feature type="chain" id="PRO_0000046157" description="Probable copper-transporting ATPase SynA">
    <location>
        <begin position="1"/>
        <end position="790"/>
    </location>
</feature>
<feature type="topological domain" description="Cytoplasmic" evidence="2">
    <location>
        <begin position="1"/>
        <end position="105"/>
    </location>
</feature>
<feature type="transmembrane region" description="Helical" evidence="2">
    <location>
        <begin position="106"/>
        <end position="125"/>
    </location>
</feature>
<feature type="topological domain" description="Extracellular" evidence="2">
    <location>
        <begin position="126"/>
        <end position="134"/>
    </location>
</feature>
<feature type="transmembrane region" description="Helical" evidence="2">
    <location>
        <begin position="135"/>
        <end position="154"/>
    </location>
</feature>
<feature type="topological domain" description="Cytoplasmic" evidence="2">
    <location>
        <begin position="155"/>
        <end position="166"/>
    </location>
</feature>
<feature type="transmembrane region" description="Helical" evidence="2">
    <location>
        <begin position="167"/>
        <end position="189"/>
    </location>
</feature>
<feature type="topological domain" description="Extracellular" evidence="2">
    <location>
        <begin position="190"/>
        <end position="193"/>
    </location>
</feature>
<feature type="transmembrane region" description="Helical" evidence="2">
    <location>
        <begin position="194"/>
        <end position="211"/>
    </location>
</feature>
<feature type="topological domain" description="Cytoplasmic" evidence="2">
    <location>
        <begin position="212"/>
        <end position="357"/>
    </location>
</feature>
<feature type="transmembrane region" description="Helical" evidence="2">
    <location>
        <begin position="358"/>
        <end position="380"/>
    </location>
</feature>
<feature type="topological domain" description="Extracellular" evidence="2">
    <location>
        <begin position="381"/>
        <end position="416"/>
    </location>
</feature>
<feature type="transmembrane region" description="Helical" evidence="2">
    <location>
        <begin position="417"/>
        <end position="439"/>
    </location>
</feature>
<feature type="topological domain" description="Cytoplasmic" evidence="2">
    <location>
        <begin position="440"/>
        <end position="726"/>
    </location>
</feature>
<feature type="transmembrane region" description="Helical" evidence="2">
    <location>
        <begin position="727"/>
        <end position="749"/>
    </location>
</feature>
<feature type="topological domain" description="Extracellular" evidence="2">
    <location>
        <begin position="750"/>
        <end position="753"/>
    </location>
</feature>
<feature type="transmembrane region" description="Helical" evidence="2">
    <location>
        <begin position="754"/>
        <end position="776"/>
    </location>
</feature>
<feature type="topological domain" description="Cytoplasmic" evidence="2">
    <location>
        <begin position="777"/>
        <end position="790"/>
    </location>
</feature>
<feature type="domain" description="HMA" evidence="3">
    <location>
        <begin position="14"/>
        <end position="81"/>
    </location>
</feature>
<feature type="active site" description="4-aspartylphosphate intermediate" evidence="1">
    <location>
        <position position="476"/>
    </location>
</feature>
<feature type="binding site" evidence="3">
    <location>
        <position position="25"/>
    </location>
    <ligand>
        <name>Cu cation</name>
        <dbReference type="ChEBI" id="CHEBI:23378"/>
    </ligand>
</feature>
<feature type="binding site" evidence="3">
    <location>
        <position position="28"/>
    </location>
    <ligand>
        <name>Cu cation</name>
        <dbReference type="ChEBI" id="CHEBI:23378"/>
    </ligand>
</feature>
<feature type="binding site">
    <location>
        <position position="669"/>
    </location>
    <ligand>
        <name>Mg(2+)</name>
        <dbReference type="ChEBI" id="CHEBI:18420"/>
    </ligand>
</feature>
<feature type="binding site">
    <location>
        <position position="673"/>
    </location>
    <ligand>
        <name>Mg(2+)</name>
        <dbReference type="ChEBI" id="CHEBI:18420"/>
    </ligand>
</feature>
<organism>
    <name type="scientific">Synechococcus sp. (strain ATCC 27144 / PCC 6301 / SAUG 1402/1)</name>
    <name type="common">Anacystis nidulans</name>
    <dbReference type="NCBI Taxonomy" id="269084"/>
    <lineage>
        <taxon>Bacteria</taxon>
        <taxon>Bacillati</taxon>
        <taxon>Cyanobacteriota</taxon>
        <taxon>Cyanophyceae</taxon>
        <taxon>Synechococcales</taxon>
        <taxon>Synechococcaceae</taxon>
        <taxon>Synechococcus</taxon>
    </lineage>
</organism>
<dbReference type="EC" id="7.2.2.9"/>
<dbReference type="EMBL" id="AP008231">
    <property type="protein sequence ID" value="BAD79975.1"/>
    <property type="molecule type" value="Genomic_DNA"/>
</dbReference>
<dbReference type="EMBL" id="X05925">
    <property type="protein sequence ID" value="CAA29364.1"/>
    <property type="molecule type" value="Genomic_DNA"/>
</dbReference>
<dbReference type="RefSeq" id="WP_011244095.1">
    <property type="nucleotide sequence ID" value="NC_006576.1"/>
</dbReference>
<dbReference type="SMR" id="P07893"/>
<dbReference type="KEGG" id="syc:syc1785_d"/>
<dbReference type="eggNOG" id="COG2217">
    <property type="taxonomic scope" value="Bacteria"/>
</dbReference>
<dbReference type="Proteomes" id="UP000001175">
    <property type="component" value="Chromosome"/>
</dbReference>
<dbReference type="GO" id="GO:0005886">
    <property type="term" value="C:plasma membrane"/>
    <property type="evidence" value="ECO:0007669"/>
    <property type="project" value="UniProtKB-SubCell"/>
</dbReference>
<dbReference type="GO" id="GO:0005524">
    <property type="term" value="F:ATP binding"/>
    <property type="evidence" value="ECO:0007669"/>
    <property type="project" value="UniProtKB-KW"/>
</dbReference>
<dbReference type="GO" id="GO:0016887">
    <property type="term" value="F:ATP hydrolysis activity"/>
    <property type="evidence" value="ECO:0007669"/>
    <property type="project" value="InterPro"/>
</dbReference>
<dbReference type="GO" id="GO:0005507">
    <property type="term" value="F:copper ion binding"/>
    <property type="evidence" value="ECO:0007669"/>
    <property type="project" value="TreeGrafter"/>
</dbReference>
<dbReference type="GO" id="GO:0043682">
    <property type="term" value="F:P-type divalent copper transporter activity"/>
    <property type="evidence" value="ECO:0007669"/>
    <property type="project" value="UniProtKB-EC"/>
</dbReference>
<dbReference type="GO" id="GO:0055070">
    <property type="term" value="P:copper ion homeostasis"/>
    <property type="evidence" value="ECO:0007669"/>
    <property type="project" value="TreeGrafter"/>
</dbReference>
<dbReference type="CDD" id="cd00371">
    <property type="entry name" value="HMA"/>
    <property type="match status" value="1"/>
</dbReference>
<dbReference type="CDD" id="cd02079">
    <property type="entry name" value="P-type_ATPase_HM"/>
    <property type="match status" value="1"/>
</dbReference>
<dbReference type="FunFam" id="3.30.70.100:FF:000001">
    <property type="entry name" value="ATPase copper transporting beta"/>
    <property type="match status" value="1"/>
</dbReference>
<dbReference type="FunFam" id="2.70.150.10:FF:000020">
    <property type="entry name" value="Copper-exporting P-type ATPase A"/>
    <property type="match status" value="1"/>
</dbReference>
<dbReference type="Gene3D" id="3.30.70.100">
    <property type="match status" value="1"/>
</dbReference>
<dbReference type="Gene3D" id="3.40.1110.10">
    <property type="entry name" value="Calcium-transporting ATPase, cytoplasmic domain N"/>
    <property type="match status" value="1"/>
</dbReference>
<dbReference type="Gene3D" id="2.70.150.10">
    <property type="entry name" value="Calcium-transporting ATPase, cytoplasmic transduction domain A"/>
    <property type="match status" value="1"/>
</dbReference>
<dbReference type="Gene3D" id="3.40.50.1000">
    <property type="entry name" value="HAD superfamily/HAD-like"/>
    <property type="match status" value="1"/>
</dbReference>
<dbReference type="InterPro" id="IPR023299">
    <property type="entry name" value="ATPase_P-typ_cyto_dom_N"/>
</dbReference>
<dbReference type="InterPro" id="IPR018303">
    <property type="entry name" value="ATPase_P-typ_P_site"/>
</dbReference>
<dbReference type="InterPro" id="IPR023298">
    <property type="entry name" value="ATPase_P-typ_TM_dom_sf"/>
</dbReference>
<dbReference type="InterPro" id="IPR008250">
    <property type="entry name" value="ATPase_P-typ_transduc_dom_A_sf"/>
</dbReference>
<dbReference type="InterPro" id="IPR036412">
    <property type="entry name" value="HAD-like_sf"/>
</dbReference>
<dbReference type="InterPro" id="IPR023214">
    <property type="entry name" value="HAD_sf"/>
</dbReference>
<dbReference type="InterPro" id="IPR017969">
    <property type="entry name" value="Heavy-metal-associated_CS"/>
</dbReference>
<dbReference type="InterPro" id="IPR006121">
    <property type="entry name" value="HMA_dom"/>
</dbReference>
<dbReference type="InterPro" id="IPR036163">
    <property type="entry name" value="HMA_dom_sf"/>
</dbReference>
<dbReference type="InterPro" id="IPR027256">
    <property type="entry name" value="P-typ_ATPase_IB"/>
</dbReference>
<dbReference type="InterPro" id="IPR001757">
    <property type="entry name" value="P_typ_ATPase"/>
</dbReference>
<dbReference type="NCBIfam" id="TIGR01525">
    <property type="entry name" value="ATPase-IB_hvy"/>
    <property type="match status" value="1"/>
</dbReference>
<dbReference type="NCBIfam" id="TIGR01494">
    <property type="entry name" value="ATPase_P-type"/>
    <property type="match status" value="1"/>
</dbReference>
<dbReference type="PANTHER" id="PTHR43520">
    <property type="entry name" value="ATP7, ISOFORM B"/>
    <property type="match status" value="1"/>
</dbReference>
<dbReference type="PANTHER" id="PTHR43520:SF8">
    <property type="entry name" value="P-TYPE CU(+) TRANSPORTER"/>
    <property type="match status" value="1"/>
</dbReference>
<dbReference type="Pfam" id="PF00122">
    <property type="entry name" value="E1-E2_ATPase"/>
    <property type="match status" value="1"/>
</dbReference>
<dbReference type="Pfam" id="PF00403">
    <property type="entry name" value="HMA"/>
    <property type="match status" value="1"/>
</dbReference>
<dbReference type="Pfam" id="PF00702">
    <property type="entry name" value="Hydrolase"/>
    <property type="match status" value="1"/>
</dbReference>
<dbReference type="PRINTS" id="PR00119">
    <property type="entry name" value="CATATPASE"/>
</dbReference>
<dbReference type="SUPFAM" id="SSF81653">
    <property type="entry name" value="Calcium ATPase, transduction domain A"/>
    <property type="match status" value="1"/>
</dbReference>
<dbReference type="SUPFAM" id="SSF81665">
    <property type="entry name" value="Calcium ATPase, transmembrane domain M"/>
    <property type="match status" value="1"/>
</dbReference>
<dbReference type="SUPFAM" id="SSF56784">
    <property type="entry name" value="HAD-like"/>
    <property type="match status" value="1"/>
</dbReference>
<dbReference type="SUPFAM" id="SSF55008">
    <property type="entry name" value="HMA, heavy metal-associated domain"/>
    <property type="match status" value="1"/>
</dbReference>
<dbReference type="PROSITE" id="PS00154">
    <property type="entry name" value="ATPASE_E1_E2"/>
    <property type="match status" value="1"/>
</dbReference>
<dbReference type="PROSITE" id="PS01047">
    <property type="entry name" value="HMA_1"/>
    <property type="match status" value="1"/>
</dbReference>
<dbReference type="PROSITE" id="PS50846">
    <property type="entry name" value="HMA_2"/>
    <property type="match status" value="1"/>
</dbReference>
<keyword id="KW-0067">ATP-binding</keyword>
<keyword id="KW-1003">Cell membrane</keyword>
<keyword id="KW-0186">Copper</keyword>
<keyword id="KW-0187">Copper transport</keyword>
<keyword id="KW-0406">Ion transport</keyword>
<keyword id="KW-0460">Magnesium</keyword>
<keyword id="KW-0472">Membrane</keyword>
<keyword id="KW-0479">Metal-binding</keyword>
<keyword id="KW-0547">Nucleotide-binding</keyword>
<keyword id="KW-0597">Phosphoprotein</keyword>
<keyword id="KW-1278">Translocase</keyword>
<keyword id="KW-0812">Transmembrane</keyword>
<keyword id="KW-1133">Transmembrane helix</keyword>
<keyword id="KW-0813">Transport</keyword>
<name>ATSY_SYNP6</name>
<gene>
    <name type="primary">synA</name>
    <name type="synonym">ctaA</name>
    <name type="ordered locus">syc1785_d</name>
</gene>
<sequence>MPAAIVHSADPSSTSILVEVEGMKCAGCVAAVERRLQQTAGVEAVSVNLITRLAKVDYDAALIEDPTVLTTEITGLGFRAQLRQDDNPLTLPIAEIPPLQQQRLQLAIAAFLLIVSSWGHLGHWLDHPLPGTDQLWFHALLAIWALLGPGRSILQAGWQGLRCGAPNMNSLVLLGTGSAYLASLVALLWPQLGWVCFLDEPVMLLGFILLGRTLEEQARFRSQAALQNLLALQPETTQLLTAPSSIAPQDLLEAPAQIWPVAQLRAGDYVQVLPGVRIPVDGCIVAGQSTLDTAMLTGEPLPQPCQVGDRVCAGTLNLSHRLVIRAEQTGSQTRLAAIVRCVAEAQQRKAPVQRFADAIAGRFVYGVCAIAALTFGFWATLGSRWWPQVLQQPLPGLLIHAPHHGMEMAHPHSHSPLLLALTLAISVLVVACPCALGLATPTAILVATGLAAEQGILVRGGDVLEQLARIKHFVFDKTGTLTQGQFELIEIQPLADVDPDRLLQWAAALEADSRHPLATALQTAAQAANLAPIAASDRQQVPGLGVSGTCDGRSLRLGNPTWVQVATAKLPTGSAAATSIWLADDQQLLACFWLQDQPRPEAAEVVQALRSRGATVQILSGDRQTTAVALAQQLGLESETVVAEVLPEDKAAAIAALQSQGDAVAMIGDGINDAPALATAAVGISLAAGSDIAQDSAGLLLSRDRLDSVLVAWNLSQMGLRTIRQNLTWALGYNVVMLPLAAGAFLPAYGLALTPAIAGACMAVSSLAVVSNSLLLRYWFRRSLNHSVSV</sequence>
<reference key="1">
    <citation type="journal article" date="2007" name="Photosyn. Res.">
        <title>Complete nucleotide sequence of the freshwater unicellular cyanobacterium Synechococcus elongatus PCC 6301 chromosome: gene content and organization.</title>
        <authorList>
            <person name="Sugita C."/>
            <person name="Ogata K."/>
            <person name="Shikata M."/>
            <person name="Jikuya H."/>
            <person name="Takano J."/>
            <person name="Furumichi M."/>
            <person name="Kanehisa M."/>
            <person name="Omata T."/>
            <person name="Sugiura M."/>
            <person name="Sugita M."/>
        </authorList>
    </citation>
    <scope>NUCLEOTIDE SEQUENCE [LARGE SCALE GENOMIC DNA]</scope>
    <source>
        <strain>ATCC 27144 / PCC 6301 / SAUG 1402/1</strain>
    </source>
</reference>
<reference key="2">
    <citation type="journal article" date="1987" name="J. Mol. Biol.">
        <title>The organization and sequence of the genes for ATP synthase subunits in the cyanobacterium Synechococcus 6301. Support for an endosymbiotic origin of chloroplasts.</title>
        <authorList>
            <person name="Cozens A.L."/>
            <person name="Walker J.E."/>
        </authorList>
    </citation>
    <scope>NUCLEOTIDE SEQUENCE [GENOMIC DNA] OF 498-790</scope>
</reference>
<accession>P07893</accession>
<accession>Q5N145</accession>